<proteinExistence type="evidence at protein level"/>
<keyword id="KW-0002">3D-structure</keyword>
<keyword id="KW-1185">Reference proteome</keyword>
<keyword id="KW-0687">Ribonucleoprotein</keyword>
<keyword id="KW-0689">Ribosomal protein</keyword>
<keyword id="KW-0694">RNA-binding</keyword>
<keyword id="KW-0699">rRNA-binding</keyword>
<evidence type="ECO:0000250" key="1"/>
<evidence type="ECO:0000256" key="2">
    <source>
        <dbReference type="SAM" id="MobiDB-lite"/>
    </source>
</evidence>
<evidence type="ECO:0000305" key="3"/>
<comment type="function">
    <text evidence="1">Binds together with bS18 to 16S ribosomal RNA.</text>
</comment>
<comment type="similarity">
    <text evidence="3">Belongs to the bacterial ribosomal protein bS6 family.</text>
</comment>
<organism>
    <name type="scientific">Borreliella burgdorferi (strain ATCC 35210 / DSM 4680 / CIP 102532 / B31)</name>
    <name type="common">Borrelia burgdorferi</name>
    <dbReference type="NCBI Taxonomy" id="224326"/>
    <lineage>
        <taxon>Bacteria</taxon>
        <taxon>Pseudomonadati</taxon>
        <taxon>Spirochaetota</taxon>
        <taxon>Spirochaetia</taxon>
        <taxon>Spirochaetales</taxon>
        <taxon>Borreliaceae</taxon>
        <taxon>Borreliella</taxon>
    </lineage>
</organism>
<gene>
    <name type="primary">rpsF</name>
    <name type="ordered locus">BB_0115</name>
</gene>
<accession>O51142</accession>
<feature type="chain" id="PRO_0000176733" description="Small ribosomal subunit protein bS6">
    <location>
        <begin position="1"/>
        <end position="139"/>
    </location>
</feature>
<feature type="region of interest" description="Disordered" evidence="2">
    <location>
        <begin position="120"/>
        <end position="139"/>
    </location>
</feature>
<feature type="compositionally biased region" description="Polar residues" evidence="2">
    <location>
        <begin position="130"/>
        <end position="139"/>
    </location>
</feature>
<reference key="1">
    <citation type="journal article" date="1997" name="Nature">
        <title>Genomic sequence of a Lyme disease spirochaete, Borrelia burgdorferi.</title>
        <authorList>
            <person name="Fraser C.M."/>
            <person name="Casjens S."/>
            <person name="Huang W.M."/>
            <person name="Sutton G.G."/>
            <person name="Clayton R.A."/>
            <person name="Lathigra R."/>
            <person name="White O."/>
            <person name="Ketchum K.A."/>
            <person name="Dodson R.J."/>
            <person name="Hickey E.K."/>
            <person name="Gwinn M.L."/>
            <person name="Dougherty B.A."/>
            <person name="Tomb J.-F."/>
            <person name="Fleischmann R.D."/>
            <person name="Richardson D.L."/>
            <person name="Peterson J.D."/>
            <person name="Kerlavage A.R."/>
            <person name="Quackenbush J."/>
            <person name="Salzberg S.L."/>
            <person name="Hanson M."/>
            <person name="van Vugt R."/>
            <person name="Palmer N."/>
            <person name="Adams M.D."/>
            <person name="Gocayne J.D."/>
            <person name="Weidman J.F."/>
            <person name="Utterback T.R."/>
            <person name="Watthey L."/>
            <person name="McDonald L.A."/>
            <person name="Artiach P."/>
            <person name="Bowman C."/>
            <person name="Garland S.A."/>
            <person name="Fujii C."/>
            <person name="Cotton M.D."/>
            <person name="Horst K."/>
            <person name="Roberts K.M."/>
            <person name="Hatch B."/>
            <person name="Smith H.O."/>
            <person name="Venter J.C."/>
        </authorList>
    </citation>
    <scope>NUCLEOTIDE SEQUENCE [LARGE SCALE GENOMIC DNA]</scope>
    <source>
        <strain>ATCC 35210 / DSM 4680 / CIP 102532 / B31</strain>
    </source>
</reference>
<protein>
    <recommendedName>
        <fullName evidence="3">Small ribosomal subunit protein bS6</fullName>
    </recommendedName>
    <alternativeName>
        <fullName>30S ribosomal protein S6</fullName>
    </alternativeName>
</protein>
<name>RS6_BORBU</name>
<dbReference type="EMBL" id="AE000783">
    <property type="protein sequence ID" value="AAC66491.1"/>
    <property type="molecule type" value="Genomic_DNA"/>
</dbReference>
<dbReference type="PIR" id="C70114">
    <property type="entry name" value="C70114"/>
</dbReference>
<dbReference type="RefSeq" id="NP_212249.1">
    <property type="nucleotide sequence ID" value="NC_001318.1"/>
</dbReference>
<dbReference type="RefSeq" id="WP_010889686.1">
    <property type="nucleotide sequence ID" value="NC_001318.1"/>
</dbReference>
<dbReference type="PDB" id="8FMW">
    <property type="method" value="EM"/>
    <property type="resolution" value="2.86 A"/>
    <property type="chains" value="F=1-97"/>
</dbReference>
<dbReference type="PDBsum" id="8FMW"/>
<dbReference type="EMDB" id="EMD-29298"/>
<dbReference type="SMR" id="O51142"/>
<dbReference type="STRING" id="224326.BB_0115"/>
<dbReference type="PaxDb" id="224326-BB_0115"/>
<dbReference type="EnsemblBacteria" id="AAC66491">
    <property type="protein sequence ID" value="AAC66491"/>
    <property type="gene ID" value="BB_0115"/>
</dbReference>
<dbReference type="KEGG" id="bbu:BB_0115"/>
<dbReference type="PATRIC" id="fig|224326.49.peg.513"/>
<dbReference type="HOGENOM" id="CLU_1902635_0_0_12"/>
<dbReference type="OrthoDB" id="9812702at2"/>
<dbReference type="Proteomes" id="UP000001807">
    <property type="component" value="Chromosome"/>
</dbReference>
<dbReference type="GO" id="GO:1990904">
    <property type="term" value="C:ribonucleoprotein complex"/>
    <property type="evidence" value="ECO:0007669"/>
    <property type="project" value="UniProtKB-KW"/>
</dbReference>
<dbReference type="GO" id="GO:0005840">
    <property type="term" value="C:ribosome"/>
    <property type="evidence" value="ECO:0007669"/>
    <property type="project" value="UniProtKB-KW"/>
</dbReference>
<dbReference type="GO" id="GO:0019843">
    <property type="term" value="F:rRNA binding"/>
    <property type="evidence" value="ECO:0007669"/>
    <property type="project" value="UniProtKB-UniRule"/>
</dbReference>
<dbReference type="GO" id="GO:0003735">
    <property type="term" value="F:structural constituent of ribosome"/>
    <property type="evidence" value="ECO:0007669"/>
    <property type="project" value="InterPro"/>
</dbReference>
<dbReference type="GO" id="GO:0006412">
    <property type="term" value="P:translation"/>
    <property type="evidence" value="ECO:0007669"/>
    <property type="project" value="UniProtKB-UniRule"/>
</dbReference>
<dbReference type="CDD" id="cd00473">
    <property type="entry name" value="bS6"/>
    <property type="match status" value="1"/>
</dbReference>
<dbReference type="Gene3D" id="3.30.70.60">
    <property type="match status" value="1"/>
</dbReference>
<dbReference type="HAMAP" id="MF_00360">
    <property type="entry name" value="Ribosomal_bS6"/>
    <property type="match status" value="1"/>
</dbReference>
<dbReference type="InterPro" id="IPR000529">
    <property type="entry name" value="Ribosomal_bS6"/>
</dbReference>
<dbReference type="InterPro" id="IPR035980">
    <property type="entry name" value="Ribosomal_bS6_sf"/>
</dbReference>
<dbReference type="InterPro" id="IPR020814">
    <property type="entry name" value="Ribosomal_S6_plastid/chlpt"/>
</dbReference>
<dbReference type="InterPro" id="IPR014717">
    <property type="entry name" value="Transl_elong_EF1B/ribsomal_bS6"/>
</dbReference>
<dbReference type="NCBIfam" id="TIGR00166">
    <property type="entry name" value="S6"/>
    <property type="match status" value="1"/>
</dbReference>
<dbReference type="Pfam" id="PF01250">
    <property type="entry name" value="Ribosomal_S6"/>
    <property type="match status" value="1"/>
</dbReference>
<dbReference type="SUPFAM" id="SSF54995">
    <property type="entry name" value="Ribosomal protein S6"/>
    <property type="match status" value="1"/>
</dbReference>
<sequence>MIKRYEACFLFKSEEIEYKGSLEEVKKSLEFFGATDVVSNFIGERALEYPIKKQARGRYEIIEFSMEGNNLKEFESRLKLIRNLLRYMILVKIVRKINTKKIKRRNFREFRDNIDKDSLKGASKVETPTGPESTDIQEK</sequence>